<name>MIAB_RHOJR</name>
<comment type="function">
    <text evidence="1">Catalyzes the methylthiolation of N6-(dimethylallyl)adenosine (i(6)A), leading to the formation of 2-methylthio-N6-(dimethylallyl)adenosine (ms(2)i(6)A) at position 37 in tRNAs that read codons beginning with uridine.</text>
</comment>
<comment type="catalytic activity">
    <reaction evidence="1">
        <text>N(6)-dimethylallyladenosine(37) in tRNA + (sulfur carrier)-SH + AH2 + 2 S-adenosyl-L-methionine = 2-methylsulfanyl-N(6)-dimethylallyladenosine(37) in tRNA + (sulfur carrier)-H + 5'-deoxyadenosine + L-methionine + A + S-adenosyl-L-homocysteine + 2 H(+)</text>
        <dbReference type="Rhea" id="RHEA:37067"/>
        <dbReference type="Rhea" id="RHEA-COMP:10375"/>
        <dbReference type="Rhea" id="RHEA-COMP:10376"/>
        <dbReference type="Rhea" id="RHEA-COMP:14737"/>
        <dbReference type="Rhea" id="RHEA-COMP:14739"/>
        <dbReference type="ChEBI" id="CHEBI:13193"/>
        <dbReference type="ChEBI" id="CHEBI:15378"/>
        <dbReference type="ChEBI" id="CHEBI:17319"/>
        <dbReference type="ChEBI" id="CHEBI:17499"/>
        <dbReference type="ChEBI" id="CHEBI:29917"/>
        <dbReference type="ChEBI" id="CHEBI:57844"/>
        <dbReference type="ChEBI" id="CHEBI:57856"/>
        <dbReference type="ChEBI" id="CHEBI:59789"/>
        <dbReference type="ChEBI" id="CHEBI:64428"/>
        <dbReference type="ChEBI" id="CHEBI:74415"/>
        <dbReference type="ChEBI" id="CHEBI:74417"/>
        <dbReference type="EC" id="2.8.4.3"/>
    </reaction>
</comment>
<comment type="cofactor">
    <cofactor evidence="1">
        <name>[4Fe-4S] cluster</name>
        <dbReference type="ChEBI" id="CHEBI:49883"/>
    </cofactor>
    <text evidence="1">Binds 2 [4Fe-4S] clusters. One cluster is coordinated with 3 cysteines and an exchangeable S-adenosyl-L-methionine.</text>
</comment>
<comment type="subunit">
    <text evidence="1">Monomer.</text>
</comment>
<comment type="subcellular location">
    <subcellularLocation>
        <location evidence="1">Cytoplasm</location>
    </subcellularLocation>
</comment>
<comment type="similarity">
    <text evidence="1">Belongs to the methylthiotransferase family. MiaB subfamily.</text>
</comment>
<comment type="sequence caution" evidence="3">
    <conflict type="erroneous initiation">
        <sequence resource="EMBL-CDS" id="ABG98543"/>
    </conflict>
</comment>
<reference key="1">
    <citation type="journal article" date="2006" name="Proc. Natl. Acad. Sci. U.S.A.">
        <title>The complete genome of Rhodococcus sp. RHA1 provides insights into a catabolic powerhouse.</title>
        <authorList>
            <person name="McLeod M.P."/>
            <person name="Warren R.L."/>
            <person name="Hsiao W.W.L."/>
            <person name="Araki N."/>
            <person name="Myhre M."/>
            <person name="Fernandes C."/>
            <person name="Miyazawa D."/>
            <person name="Wong W."/>
            <person name="Lillquist A.L."/>
            <person name="Wang D."/>
            <person name="Dosanjh M."/>
            <person name="Hara H."/>
            <person name="Petrescu A."/>
            <person name="Morin R.D."/>
            <person name="Yang G."/>
            <person name="Stott J.M."/>
            <person name="Schein J.E."/>
            <person name="Shin H."/>
            <person name="Smailus D."/>
            <person name="Siddiqui A.S."/>
            <person name="Marra M.A."/>
            <person name="Jones S.J.M."/>
            <person name="Holt R."/>
            <person name="Brinkman F.S.L."/>
            <person name="Miyauchi K."/>
            <person name="Fukuda M."/>
            <person name="Davies J.E."/>
            <person name="Mohn W.W."/>
            <person name="Eltis L.D."/>
        </authorList>
    </citation>
    <scope>NUCLEOTIDE SEQUENCE [LARGE SCALE GENOMIC DNA]</scope>
    <source>
        <strain>RHA1</strain>
    </source>
</reference>
<sequence length="505" mass="54935">MDTIDQTPHRSYEVRTYGCQMNVHDSERLSGLLEDAGYTKAAAGQAPDLVVFNTCAVRENADNKLYGNLSHLAPAKERNPDMQIAVGGCLAQKDRDVVVKKAPWVDVVFGTHNIGSLPALLDRARHNQRAEVEILEALEAFPSTLPAKRESAYAGWVSISVGCNNTCTFCIVPALRGKEVDRRPGDILAEVQALVNEGVVEVTLLGQNVNAYGVSFADPDQPRDRGAFAALLRACGQIDGLERVRFTSPHPAEFTDDVIEAMAETPNVCPQLHMPLQSGSDRVLKAMRRSYRKSRFLGIIDKVRTAMPHAAITTDIIVGFPGETEEDFQDTLDVVRQARFTSAYTFQYSKRPGTPAAEMDEQLPKAVVQERYERLIALQEQITLEENQKLVGAEVELLVAAGEGRKNAETARMSGRARDGRLVHFRPEGNLDGTVRPGDVVTVVVSAAAPHHLVADTPVLTHRRTRAGDSFEKGVTPKTPPIGVGLGLPQIGAPAPLPVQMGCNA</sequence>
<accession>Q0S1P3</accession>
<proteinExistence type="inferred from homology"/>
<evidence type="ECO:0000255" key="1">
    <source>
        <dbReference type="HAMAP-Rule" id="MF_01864"/>
    </source>
</evidence>
<evidence type="ECO:0000255" key="2">
    <source>
        <dbReference type="PROSITE-ProRule" id="PRU01266"/>
    </source>
</evidence>
<evidence type="ECO:0000305" key="3"/>
<gene>
    <name evidence="1" type="primary">miaB</name>
    <name type="ordered locus">RHA1_ro06771</name>
</gene>
<protein>
    <recommendedName>
        <fullName evidence="1">tRNA-2-methylthio-N(6)-dimethylallyladenosine synthase</fullName>
        <ecNumber evidence="1">2.8.4.3</ecNumber>
    </recommendedName>
    <alternativeName>
        <fullName evidence="1">(Dimethylallyl)adenosine tRNA methylthiotransferase MiaB</fullName>
    </alternativeName>
    <alternativeName>
        <fullName evidence="1">tRNA-i(6)A37 methylthiotransferase</fullName>
    </alternativeName>
</protein>
<keyword id="KW-0004">4Fe-4S</keyword>
<keyword id="KW-0963">Cytoplasm</keyword>
<keyword id="KW-0408">Iron</keyword>
<keyword id="KW-0411">Iron-sulfur</keyword>
<keyword id="KW-0479">Metal-binding</keyword>
<keyword id="KW-0949">S-adenosyl-L-methionine</keyword>
<keyword id="KW-0808">Transferase</keyword>
<keyword id="KW-0819">tRNA processing</keyword>
<dbReference type="EC" id="2.8.4.3" evidence="1"/>
<dbReference type="EMBL" id="CP000431">
    <property type="protein sequence ID" value="ABG98543.1"/>
    <property type="status" value="ALT_INIT"/>
    <property type="molecule type" value="Genomic_DNA"/>
</dbReference>
<dbReference type="RefSeq" id="WP_009480026.1">
    <property type="nucleotide sequence ID" value="NC_008268.1"/>
</dbReference>
<dbReference type="SMR" id="Q0S1P3"/>
<dbReference type="KEGG" id="rha:RHA1_ro06771"/>
<dbReference type="eggNOG" id="COG0621">
    <property type="taxonomic scope" value="Bacteria"/>
</dbReference>
<dbReference type="HOGENOM" id="CLU_018697_2_2_11"/>
<dbReference type="OrthoDB" id="9805215at2"/>
<dbReference type="Proteomes" id="UP000008710">
    <property type="component" value="Chromosome"/>
</dbReference>
<dbReference type="GO" id="GO:0005829">
    <property type="term" value="C:cytosol"/>
    <property type="evidence" value="ECO:0007669"/>
    <property type="project" value="TreeGrafter"/>
</dbReference>
<dbReference type="GO" id="GO:0051539">
    <property type="term" value="F:4 iron, 4 sulfur cluster binding"/>
    <property type="evidence" value="ECO:0007669"/>
    <property type="project" value="UniProtKB-UniRule"/>
</dbReference>
<dbReference type="GO" id="GO:0046872">
    <property type="term" value="F:metal ion binding"/>
    <property type="evidence" value="ECO:0007669"/>
    <property type="project" value="UniProtKB-KW"/>
</dbReference>
<dbReference type="GO" id="GO:0035597">
    <property type="term" value="F:N6-isopentenyladenosine methylthiotransferase activity"/>
    <property type="evidence" value="ECO:0007669"/>
    <property type="project" value="TreeGrafter"/>
</dbReference>
<dbReference type="CDD" id="cd01335">
    <property type="entry name" value="Radical_SAM"/>
    <property type="match status" value="1"/>
</dbReference>
<dbReference type="FunFam" id="3.40.50.12160:FF:000003">
    <property type="entry name" value="CDK5 regulatory subunit-associated protein 1"/>
    <property type="match status" value="1"/>
</dbReference>
<dbReference type="FunFam" id="3.80.30.20:FF:000001">
    <property type="entry name" value="tRNA-2-methylthio-N(6)-dimethylallyladenosine synthase 2"/>
    <property type="match status" value="1"/>
</dbReference>
<dbReference type="Gene3D" id="3.40.50.12160">
    <property type="entry name" value="Methylthiotransferase, N-terminal domain"/>
    <property type="match status" value="1"/>
</dbReference>
<dbReference type="Gene3D" id="3.80.30.20">
    <property type="entry name" value="tm_1862 like domain"/>
    <property type="match status" value="1"/>
</dbReference>
<dbReference type="HAMAP" id="MF_01864">
    <property type="entry name" value="tRNA_metthiotr_MiaB"/>
    <property type="match status" value="1"/>
</dbReference>
<dbReference type="InterPro" id="IPR006638">
    <property type="entry name" value="Elp3/MiaA/NifB-like_rSAM"/>
</dbReference>
<dbReference type="InterPro" id="IPR005839">
    <property type="entry name" value="Methylthiotransferase"/>
</dbReference>
<dbReference type="InterPro" id="IPR020612">
    <property type="entry name" value="Methylthiotransferase_CS"/>
</dbReference>
<dbReference type="InterPro" id="IPR013848">
    <property type="entry name" value="Methylthiotransferase_N"/>
</dbReference>
<dbReference type="InterPro" id="IPR038135">
    <property type="entry name" value="Methylthiotransferase_N_sf"/>
</dbReference>
<dbReference type="InterPro" id="IPR006463">
    <property type="entry name" value="MiaB_methiolase"/>
</dbReference>
<dbReference type="InterPro" id="IPR007197">
    <property type="entry name" value="rSAM"/>
</dbReference>
<dbReference type="InterPro" id="IPR023404">
    <property type="entry name" value="rSAM_horseshoe"/>
</dbReference>
<dbReference type="InterPro" id="IPR002792">
    <property type="entry name" value="TRAM_dom"/>
</dbReference>
<dbReference type="NCBIfam" id="TIGR01574">
    <property type="entry name" value="miaB-methiolase"/>
    <property type="match status" value="1"/>
</dbReference>
<dbReference type="NCBIfam" id="TIGR00089">
    <property type="entry name" value="MiaB/RimO family radical SAM methylthiotransferase"/>
    <property type="match status" value="1"/>
</dbReference>
<dbReference type="PANTHER" id="PTHR43020">
    <property type="entry name" value="CDK5 REGULATORY SUBUNIT-ASSOCIATED PROTEIN 1"/>
    <property type="match status" value="1"/>
</dbReference>
<dbReference type="PANTHER" id="PTHR43020:SF2">
    <property type="entry name" value="MITOCHONDRIAL TRNA METHYLTHIOTRANSFERASE CDK5RAP1"/>
    <property type="match status" value="1"/>
</dbReference>
<dbReference type="Pfam" id="PF04055">
    <property type="entry name" value="Radical_SAM"/>
    <property type="match status" value="1"/>
</dbReference>
<dbReference type="Pfam" id="PF00919">
    <property type="entry name" value="UPF0004"/>
    <property type="match status" value="1"/>
</dbReference>
<dbReference type="SFLD" id="SFLDF00273">
    <property type="entry name" value="(dimethylallyl)adenosine_tRNA"/>
    <property type="match status" value="1"/>
</dbReference>
<dbReference type="SFLD" id="SFLDG01082">
    <property type="entry name" value="B12-binding_domain_containing"/>
    <property type="match status" value="1"/>
</dbReference>
<dbReference type="SFLD" id="SFLDG01061">
    <property type="entry name" value="methylthiotransferase"/>
    <property type="match status" value="1"/>
</dbReference>
<dbReference type="SMART" id="SM00729">
    <property type="entry name" value="Elp3"/>
    <property type="match status" value="1"/>
</dbReference>
<dbReference type="SUPFAM" id="SSF102114">
    <property type="entry name" value="Radical SAM enzymes"/>
    <property type="match status" value="1"/>
</dbReference>
<dbReference type="PROSITE" id="PS51449">
    <property type="entry name" value="MTTASE_N"/>
    <property type="match status" value="1"/>
</dbReference>
<dbReference type="PROSITE" id="PS01278">
    <property type="entry name" value="MTTASE_RADICAL"/>
    <property type="match status" value="1"/>
</dbReference>
<dbReference type="PROSITE" id="PS51918">
    <property type="entry name" value="RADICAL_SAM"/>
    <property type="match status" value="1"/>
</dbReference>
<dbReference type="PROSITE" id="PS50926">
    <property type="entry name" value="TRAM"/>
    <property type="match status" value="1"/>
</dbReference>
<organism>
    <name type="scientific">Rhodococcus jostii (strain RHA1)</name>
    <dbReference type="NCBI Taxonomy" id="101510"/>
    <lineage>
        <taxon>Bacteria</taxon>
        <taxon>Bacillati</taxon>
        <taxon>Actinomycetota</taxon>
        <taxon>Actinomycetes</taxon>
        <taxon>Mycobacteriales</taxon>
        <taxon>Nocardiaceae</taxon>
        <taxon>Rhodococcus</taxon>
    </lineage>
</organism>
<feature type="chain" id="PRO_0000374490" description="tRNA-2-methylthio-N(6)-dimethylallyladenosine synthase">
    <location>
        <begin position="1"/>
        <end position="505"/>
    </location>
</feature>
<feature type="domain" description="MTTase N-terminal" evidence="1">
    <location>
        <begin position="10"/>
        <end position="126"/>
    </location>
</feature>
<feature type="domain" description="Radical SAM core" evidence="2">
    <location>
        <begin position="149"/>
        <end position="385"/>
    </location>
</feature>
<feature type="domain" description="TRAM" evidence="1">
    <location>
        <begin position="388"/>
        <end position="459"/>
    </location>
</feature>
<feature type="binding site" evidence="1">
    <location>
        <position position="19"/>
    </location>
    <ligand>
        <name>[4Fe-4S] cluster</name>
        <dbReference type="ChEBI" id="CHEBI:49883"/>
        <label>1</label>
    </ligand>
</feature>
<feature type="binding site" evidence="1">
    <location>
        <position position="55"/>
    </location>
    <ligand>
        <name>[4Fe-4S] cluster</name>
        <dbReference type="ChEBI" id="CHEBI:49883"/>
        <label>1</label>
    </ligand>
</feature>
<feature type="binding site" evidence="1">
    <location>
        <position position="89"/>
    </location>
    <ligand>
        <name>[4Fe-4S] cluster</name>
        <dbReference type="ChEBI" id="CHEBI:49883"/>
        <label>1</label>
    </ligand>
</feature>
<feature type="binding site" evidence="1">
    <location>
        <position position="163"/>
    </location>
    <ligand>
        <name>[4Fe-4S] cluster</name>
        <dbReference type="ChEBI" id="CHEBI:49883"/>
        <label>2</label>
        <note>4Fe-4S-S-AdoMet</note>
    </ligand>
</feature>
<feature type="binding site" evidence="1">
    <location>
        <position position="167"/>
    </location>
    <ligand>
        <name>[4Fe-4S] cluster</name>
        <dbReference type="ChEBI" id="CHEBI:49883"/>
        <label>2</label>
        <note>4Fe-4S-S-AdoMet</note>
    </ligand>
</feature>
<feature type="binding site" evidence="1">
    <location>
        <position position="170"/>
    </location>
    <ligand>
        <name>[4Fe-4S] cluster</name>
        <dbReference type="ChEBI" id="CHEBI:49883"/>
        <label>2</label>
        <note>4Fe-4S-S-AdoMet</note>
    </ligand>
</feature>